<proteinExistence type="inferred from homology"/>
<dbReference type="EC" id="6.1.1.17" evidence="1"/>
<dbReference type="EMBL" id="CP000802">
    <property type="protein sequence ID" value="ABV06806.1"/>
    <property type="molecule type" value="Genomic_DNA"/>
</dbReference>
<dbReference type="RefSeq" id="WP_000695655.1">
    <property type="nucleotide sequence ID" value="NC_009800.1"/>
</dbReference>
<dbReference type="SMR" id="A8A2Q2"/>
<dbReference type="GeneID" id="93774730"/>
<dbReference type="KEGG" id="ecx:EcHS_A2537"/>
<dbReference type="HOGENOM" id="CLU_015768_6_0_6"/>
<dbReference type="GO" id="GO:0005829">
    <property type="term" value="C:cytosol"/>
    <property type="evidence" value="ECO:0007669"/>
    <property type="project" value="TreeGrafter"/>
</dbReference>
<dbReference type="GO" id="GO:0005524">
    <property type="term" value="F:ATP binding"/>
    <property type="evidence" value="ECO:0007669"/>
    <property type="project" value="UniProtKB-UniRule"/>
</dbReference>
<dbReference type="GO" id="GO:0004818">
    <property type="term" value="F:glutamate-tRNA ligase activity"/>
    <property type="evidence" value="ECO:0007669"/>
    <property type="project" value="UniProtKB-UniRule"/>
</dbReference>
<dbReference type="GO" id="GO:0000049">
    <property type="term" value="F:tRNA binding"/>
    <property type="evidence" value="ECO:0007669"/>
    <property type="project" value="InterPro"/>
</dbReference>
<dbReference type="GO" id="GO:0008270">
    <property type="term" value="F:zinc ion binding"/>
    <property type="evidence" value="ECO:0007669"/>
    <property type="project" value="UniProtKB-UniRule"/>
</dbReference>
<dbReference type="GO" id="GO:0006424">
    <property type="term" value="P:glutamyl-tRNA aminoacylation"/>
    <property type="evidence" value="ECO:0007669"/>
    <property type="project" value="UniProtKB-UniRule"/>
</dbReference>
<dbReference type="CDD" id="cd00808">
    <property type="entry name" value="GluRS_core"/>
    <property type="match status" value="1"/>
</dbReference>
<dbReference type="FunFam" id="1.10.10.350:FF:000001">
    <property type="entry name" value="Glutamate--tRNA ligase"/>
    <property type="match status" value="1"/>
</dbReference>
<dbReference type="FunFam" id="3.40.50.620:FF:000007">
    <property type="entry name" value="Glutamate--tRNA ligase"/>
    <property type="match status" value="1"/>
</dbReference>
<dbReference type="Gene3D" id="1.10.10.350">
    <property type="match status" value="1"/>
</dbReference>
<dbReference type="Gene3D" id="3.40.50.620">
    <property type="entry name" value="HUPs"/>
    <property type="match status" value="1"/>
</dbReference>
<dbReference type="HAMAP" id="MF_00022">
    <property type="entry name" value="Glu_tRNA_synth_type1"/>
    <property type="match status" value="1"/>
</dbReference>
<dbReference type="InterPro" id="IPR045462">
    <property type="entry name" value="aa-tRNA-synth_I_cd-bd"/>
</dbReference>
<dbReference type="InterPro" id="IPR020751">
    <property type="entry name" value="aa-tRNA-synth_I_codon-bd_sub2"/>
</dbReference>
<dbReference type="InterPro" id="IPR001412">
    <property type="entry name" value="aa-tRNA-synth_I_CS"/>
</dbReference>
<dbReference type="InterPro" id="IPR008925">
    <property type="entry name" value="aa_tRNA-synth_I_cd-bd_sf"/>
</dbReference>
<dbReference type="InterPro" id="IPR004527">
    <property type="entry name" value="Glu-tRNA-ligase_bac/mito"/>
</dbReference>
<dbReference type="InterPro" id="IPR000924">
    <property type="entry name" value="Glu/Gln-tRNA-synth"/>
</dbReference>
<dbReference type="InterPro" id="IPR020058">
    <property type="entry name" value="Glu/Gln-tRNA-synth_Ib_cat-dom"/>
</dbReference>
<dbReference type="InterPro" id="IPR049940">
    <property type="entry name" value="GluQ/Sye"/>
</dbReference>
<dbReference type="InterPro" id="IPR033910">
    <property type="entry name" value="GluRS_core"/>
</dbReference>
<dbReference type="InterPro" id="IPR014729">
    <property type="entry name" value="Rossmann-like_a/b/a_fold"/>
</dbReference>
<dbReference type="NCBIfam" id="TIGR00464">
    <property type="entry name" value="gltX_bact"/>
    <property type="match status" value="1"/>
</dbReference>
<dbReference type="PANTHER" id="PTHR43311">
    <property type="entry name" value="GLUTAMATE--TRNA LIGASE"/>
    <property type="match status" value="1"/>
</dbReference>
<dbReference type="PANTHER" id="PTHR43311:SF2">
    <property type="entry name" value="GLUTAMATE--TRNA LIGASE, MITOCHONDRIAL-RELATED"/>
    <property type="match status" value="1"/>
</dbReference>
<dbReference type="Pfam" id="PF19269">
    <property type="entry name" value="Anticodon_2"/>
    <property type="match status" value="1"/>
</dbReference>
<dbReference type="Pfam" id="PF00749">
    <property type="entry name" value="tRNA-synt_1c"/>
    <property type="match status" value="1"/>
</dbReference>
<dbReference type="PRINTS" id="PR00987">
    <property type="entry name" value="TRNASYNTHGLU"/>
</dbReference>
<dbReference type="SUPFAM" id="SSF48163">
    <property type="entry name" value="An anticodon-binding domain of class I aminoacyl-tRNA synthetases"/>
    <property type="match status" value="1"/>
</dbReference>
<dbReference type="SUPFAM" id="SSF52374">
    <property type="entry name" value="Nucleotidylyl transferase"/>
    <property type="match status" value="1"/>
</dbReference>
<dbReference type="PROSITE" id="PS00178">
    <property type="entry name" value="AA_TRNA_LIGASE_I"/>
    <property type="match status" value="1"/>
</dbReference>
<reference key="1">
    <citation type="journal article" date="2008" name="J. Bacteriol.">
        <title>The pangenome structure of Escherichia coli: comparative genomic analysis of E. coli commensal and pathogenic isolates.</title>
        <authorList>
            <person name="Rasko D.A."/>
            <person name="Rosovitz M.J."/>
            <person name="Myers G.S.A."/>
            <person name="Mongodin E.F."/>
            <person name="Fricke W.F."/>
            <person name="Gajer P."/>
            <person name="Crabtree J."/>
            <person name="Sebaihia M."/>
            <person name="Thomson N.R."/>
            <person name="Chaudhuri R."/>
            <person name="Henderson I.R."/>
            <person name="Sperandio V."/>
            <person name="Ravel J."/>
        </authorList>
    </citation>
    <scope>NUCLEOTIDE SEQUENCE [LARGE SCALE GENOMIC DNA]</scope>
    <source>
        <strain>HS</strain>
    </source>
</reference>
<name>SYE_ECOHS</name>
<gene>
    <name evidence="1" type="primary">gltX</name>
    <name type="ordered locus">EcHS_A2537</name>
</gene>
<protein>
    <recommendedName>
        <fullName evidence="1">Glutamate--tRNA ligase</fullName>
        <ecNumber evidence="1">6.1.1.17</ecNumber>
    </recommendedName>
    <alternativeName>
        <fullName evidence="1">Glutamyl-tRNA synthetase</fullName>
        <shortName evidence="1">GluRS</shortName>
    </alternativeName>
</protein>
<evidence type="ECO:0000255" key="1">
    <source>
        <dbReference type="HAMAP-Rule" id="MF_00022"/>
    </source>
</evidence>
<comment type="function">
    <text evidence="1">Catalyzes the attachment of glutamate to tRNA(Glu) in a two-step reaction: glutamate is first activated by ATP to form Glu-AMP and then transferred to the acceptor end of tRNA(Glu).</text>
</comment>
<comment type="catalytic activity">
    <reaction evidence="1">
        <text>tRNA(Glu) + L-glutamate + ATP = L-glutamyl-tRNA(Glu) + AMP + diphosphate</text>
        <dbReference type="Rhea" id="RHEA:23540"/>
        <dbReference type="Rhea" id="RHEA-COMP:9663"/>
        <dbReference type="Rhea" id="RHEA-COMP:9680"/>
        <dbReference type="ChEBI" id="CHEBI:29985"/>
        <dbReference type="ChEBI" id="CHEBI:30616"/>
        <dbReference type="ChEBI" id="CHEBI:33019"/>
        <dbReference type="ChEBI" id="CHEBI:78442"/>
        <dbReference type="ChEBI" id="CHEBI:78520"/>
        <dbReference type="ChEBI" id="CHEBI:456215"/>
        <dbReference type="EC" id="6.1.1.17"/>
    </reaction>
</comment>
<comment type="cofactor">
    <cofactor evidence="1">
        <name>Zn(2+)</name>
        <dbReference type="ChEBI" id="CHEBI:29105"/>
    </cofactor>
    <text evidence="1">Binds 1 zinc ion per subunit.</text>
</comment>
<comment type="subunit">
    <text evidence="1">Monomer.</text>
</comment>
<comment type="subcellular location">
    <subcellularLocation>
        <location evidence="1">Cytoplasm</location>
    </subcellularLocation>
</comment>
<comment type="similarity">
    <text evidence="1">Belongs to the class-I aminoacyl-tRNA synthetase family. Glutamate--tRNA ligase type 1 subfamily.</text>
</comment>
<sequence length="471" mass="53816">MKIKTRFAPSPTGYLHVGGARTALYSWLFARNHGGEFVLRIEDTDLERSTPEAIEAIMDGMNWLSLEWDEGPYYQTKRFDRYNAVIDQMLEEGTAYKCYCSKERLEALREEQMAKGEKPRYDGRCRHSHEHHADDEPCVVRFANPQEGSVVFDDQIRGPIEFSNQELDDLIIRRTDGSPTYNFCVVVDDWDMEITHVIRGEDHINNTPRQINILKALKAPVPVYAHVSMINGDDGKKLSKRHGAVSVMQYRDDGYLPEALLNYLVRLGWSHGDQEIFTREEMIKYFTLNAVSKSASAFNTDKLLWLNHHYINALPPEYVATHLQWHIEQENIDTRNGPQLADLVKLLGERCKTLKEMAQSCRYFYEDFAEFDADAAKKHLRPVARQPLEVVRDKLAAITDWTAENVHHAIQATADELEVGMGKVGMPLRVAVTGAGQSPALDVTVHAIGKTRSIERINKALDFIAERENQQ</sequence>
<feature type="chain" id="PRO_1000057193" description="Glutamate--tRNA ligase">
    <location>
        <begin position="1"/>
        <end position="471"/>
    </location>
</feature>
<feature type="short sequence motif" description="'HIGH' region" evidence="1">
    <location>
        <begin position="9"/>
        <end position="19"/>
    </location>
</feature>
<feature type="short sequence motif" description="'KMSKS' region" evidence="1">
    <location>
        <begin position="237"/>
        <end position="241"/>
    </location>
</feature>
<feature type="binding site" evidence="1">
    <location>
        <position position="98"/>
    </location>
    <ligand>
        <name>Zn(2+)</name>
        <dbReference type="ChEBI" id="CHEBI:29105"/>
    </ligand>
</feature>
<feature type="binding site" evidence="1">
    <location>
        <position position="100"/>
    </location>
    <ligand>
        <name>Zn(2+)</name>
        <dbReference type="ChEBI" id="CHEBI:29105"/>
    </ligand>
</feature>
<feature type="binding site" evidence="1">
    <location>
        <position position="125"/>
    </location>
    <ligand>
        <name>Zn(2+)</name>
        <dbReference type="ChEBI" id="CHEBI:29105"/>
    </ligand>
</feature>
<feature type="binding site" evidence="1">
    <location>
        <position position="127"/>
    </location>
    <ligand>
        <name>Zn(2+)</name>
        <dbReference type="ChEBI" id="CHEBI:29105"/>
    </ligand>
</feature>
<feature type="binding site" evidence="1">
    <location>
        <position position="240"/>
    </location>
    <ligand>
        <name>ATP</name>
        <dbReference type="ChEBI" id="CHEBI:30616"/>
    </ligand>
</feature>
<accession>A8A2Q2</accession>
<keyword id="KW-0030">Aminoacyl-tRNA synthetase</keyword>
<keyword id="KW-0067">ATP-binding</keyword>
<keyword id="KW-0963">Cytoplasm</keyword>
<keyword id="KW-0436">Ligase</keyword>
<keyword id="KW-0479">Metal-binding</keyword>
<keyword id="KW-0547">Nucleotide-binding</keyword>
<keyword id="KW-0648">Protein biosynthesis</keyword>
<keyword id="KW-0862">Zinc</keyword>
<organism>
    <name type="scientific">Escherichia coli O9:H4 (strain HS)</name>
    <dbReference type="NCBI Taxonomy" id="331112"/>
    <lineage>
        <taxon>Bacteria</taxon>
        <taxon>Pseudomonadati</taxon>
        <taxon>Pseudomonadota</taxon>
        <taxon>Gammaproteobacteria</taxon>
        <taxon>Enterobacterales</taxon>
        <taxon>Enterobacteriaceae</taxon>
        <taxon>Escherichia</taxon>
    </lineage>
</organism>